<keyword id="KW-0131">Cell cycle</keyword>
<keyword id="KW-0132">Cell division</keyword>
<keyword id="KW-1003">Cell membrane</keyword>
<keyword id="KW-0472">Membrane</keyword>
<keyword id="KW-1185">Reference proteome</keyword>
<organism>
    <name type="scientific">Buchnera aphidicola subsp. Baizongia pistaciae (strain Bp)</name>
    <dbReference type="NCBI Taxonomy" id="224915"/>
    <lineage>
        <taxon>Bacteria</taxon>
        <taxon>Pseudomonadati</taxon>
        <taxon>Pseudomonadota</taxon>
        <taxon>Gammaproteobacteria</taxon>
        <taxon>Enterobacterales</taxon>
        <taxon>Erwiniaceae</taxon>
        <taxon>Buchnera</taxon>
    </lineage>
</organism>
<reference key="1">
    <citation type="journal article" date="2003" name="Proc. Natl. Acad. Sci. U.S.A.">
        <title>Reductive genome evolution in Buchnera aphidicola.</title>
        <authorList>
            <person name="van Ham R.C.H.J."/>
            <person name="Kamerbeek J."/>
            <person name="Palacios C."/>
            <person name="Rausell C."/>
            <person name="Abascal F."/>
            <person name="Bastolla U."/>
            <person name="Fernandez J.M."/>
            <person name="Jimenez L."/>
            <person name="Postigo M."/>
            <person name="Silva F.J."/>
            <person name="Tamames J."/>
            <person name="Viguera E."/>
            <person name="Latorre A."/>
            <person name="Valencia A."/>
            <person name="Moran F."/>
            <person name="Moya A."/>
        </authorList>
    </citation>
    <scope>NUCLEOTIDE SEQUENCE [LARGE SCALE GENOMIC DNA]</scope>
    <source>
        <strain>Bp</strain>
    </source>
</reference>
<accession>Q89AQ4</accession>
<feature type="chain" id="PRO_0000062733" description="Cell division protein FtsA">
    <location>
        <begin position="1"/>
        <end position="421"/>
    </location>
</feature>
<name>FTSA_BUCBP</name>
<gene>
    <name evidence="1" type="primary">ftsA</name>
    <name type="ordered locus">bbp_195</name>
</gene>
<proteinExistence type="inferred from homology"/>
<protein>
    <recommendedName>
        <fullName evidence="1">Cell division protein FtsA</fullName>
    </recommendedName>
</protein>
<comment type="function">
    <text evidence="1">Cell division protein that is involved in the assembly of the Z ring. May serve as a membrane anchor for the Z ring.</text>
</comment>
<comment type="subunit">
    <text evidence="1">Self-interacts. Interacts with FtsZ.</text>
</comment>
<comment type="subcellular location">
    <subcellularLocation>
        <location evidence="1">Cell membrane</location>
        <topology evidence="1">Peripheral membrane protein</topology>
        <orientation evidence="1">Cytoplasmic side</orientation>
    </subcellularLocation>
    <text evidence="1">Localizes to the Z ring in an FtsZ-dependent manner. Targeted to the membrane through a conserved C-terminal amphipathic helix.</text>
</comment>
<comment type="similarity">
    <text evidence="1">Belongs to the FtsA/MreB family.</text>
</comment>
<dbReference type="EMBL" id="AE016826">
    <property type="protein sequence ID" value="AAO26927.1"/>
    <property type="molecule type" value="Genomic_DNA"/>
</dbReference>
<dbReference type="RefSeq" id="WP_011091328.1">
    <property type="nucleotide sequence ID" value="NC_004545.1"/>
</dbReference>
<dbReference type="SMR" id="Q89AQ4"/>
<dbReference type="STRING" id="224915.bbp_195"/>
<dbReference type="KEGG" id="bab:bbp_195"/>
<dbReference type="eggNOG" id="COG0849">
    <property type="taxonomic scope" value="Bacteria"/>
</dbReference>
<dbReference type="HOGENOM" id="CLU_037850_3_2_6"/>
<dbReference type="OrthoDB" id="9810567at2"/>
<dbReference type="Proteomes" id="UP000000601">
    <property type="component" value="Chromosome"/>
</dbReference>
<dbReference type="GO" id="GO:0032153">
    <property type="term" value="C:cell division site"/>
    <property type="evidence" value="ECO:0007669"/>
    <property type="project" value="UniProtKB-UniRule"/>
</dbReference>
<dbReference type="GO" id="GO:0009898">
    <property type="term" value="C:cytoplasmic side of plasma membrane"/>
    <property type="evidence" value="ECO:0007669"/>
    <property type="project" value="UniProtKB-UniRule"/>
</dbReference>
<dbReference type="GO" id="GO:0043093">
    <property type="term" value="P:FtsZ-dependent cytokinesis"/>
    <property type="evidence" value="ECO:0007669"/>
    <property type="project" value="UniProtKB-UniRule"/>
</dbReference>
<dbReference type="CDD" id="cd24048">
    <property type="entry name" value="ASKHA_NBD_FtsA"/>
    <property type="match status" value="1"/>
</dbReference>
<dbReference type="FunFam" id="3.30.1490.110:FF:000001">
    <property type="entry name" value="Cell division protein FtsA"/>
    <property type="match status" value="1"/>
</dbReference>
<dbReference type="Gene3D" id="3.30.1490.110">
    <property type="match status" value="1"/>
</dbReference>
<dbReference type="Gene3D" id="3.30.420.40">
    <property type="match status" value="1"/>
</dbReference>
<dbReference type="HAMAP" id="MF_02033">
    <property type="entry name" value="FtsA"/>
    <property type="match status" value="1"/>
</dbReference>
<dbReference type="InterPro" id="IPR043129">
    <property type="entry name" value="ATPase_NBD"/>
</dbReference>
<dbReference type="InterPro" id="IPR020823">
    <property type="entry name" value="Cell_div_FtsA"/>
</dbReference>
<dbReference type="InterPro" id="IPR050696">
    <property type="entry name" value="FtsA/MreB"/>
</dbReference>
<dbReference type="InterPro" id="IPR003494">
    <property type="entry name" value="SHS2_FtsA"/>
</dbReference>
<dbReference type="NCBIfam" id="TIGR01174">
    <property type="entry name" value="ftsA"/>
    <property type="match status" value="1"/>
</dbReference>
<dbReference type="NCBIfam" id="NF007009">
    <property type="entry name" value="PRK09472.1"/>
    <property type="match status" value="1"/>
</dbReference>
<dbReference type="PANTHER" id="PTHR32432:SF4">
    <property type="entry name" value="CELL DIVISION PROTEIN FTSA"/>
    <property type="match status" value="1"/>
</dbReference>
<dbReference type="PANTHER" id="PTHR32432">
    <property type="entry name" value="CELL DIVISION PROTEIN FTSA-RELATED"/>
    <property type="match status" value="1"/>
</dbReference>
<dbReference type="Pfam" id="PF14450">
    <property type="entry name" value="FtsA"/>
    <property type="match status" value="1"/>
</dbReference>
<dbReference type="Pfam" id="PF02491">
    <property type="entry name" value="SHS2_FTSA"/>
    <property type="match status" value="1"/>
</dbReference>
<dbReference type="PIRSF" id="PIRSF003101">
    <property type="entry name" value="FtsA"/>
    <property type="match status" value="1"/>
</dbReference>
<dbReference type="SMART" id="SM00842">
    <property type="entry name" value="FtsA"/>
    <property type="match status" value="1"/>
</dbReference>
<dbReference type="SUPFAM" id="SSF53067">
    <property type="entry name" value="Actin-like ATPase domain"/>
    <property type="match status" value="2"/>
</dbReference>
<evidence type="ECO:0000255" key="1">
    <source>
        <dbReference type="HAMAP-Rule" id="MF_02033"/>
    </source>
</evidence>
<sequence>MIKVLKKKLIVGLEIGTTKTTISVGEILEDDTINIIGIGLSKSIGIDRGIINDLKSIVECIKKVINQAETMANCNITSIYLALSNKYINCQNEIGIIPILQEEITKNDIENVIHTAKSVRIRNEHKILHIIPQEYSIDERTGIKNPIGLSGIRMQAIVHLITCHSSIKKNIIKAVESCGIRVDYSVFSGLASSESVLTTDERNLGVCIVDIGGGTTDIAIYTNGTLKHSCVIPYAGNTVTNDISYVFNIPFMYAEKIKIKYGYAMQSSDITEEEIKIVNEDNTIIQTFHKDKLTEVIESRYIELLTLINEEIKNTQKKLKKSGRIHKLGAGIVLTGGASNIKLFKNCAEKVFNIPVRIGCPKKNNINTAKLTNNTQTGSLSTVIGLLYFGKKYFYSHRNKNSYNFFKKWLQYINNWIKKEF</sequence>